<sequence length="215" mass="22847">MKLGLIGKKIGMTRVFTESGNSIPVTVLDVSGNRVVQVKTEEKDGYSAVQLTQGYRRKNRITKALSGHFSQAGVEAGTVIKEFRVDHDIGSDIKIGSEISVELFEVGSKVDVCGISIGKGYAGTIKRHNFSSSRASHGNSRSHNVPGSIGMAQDPGRVFPGKKMTGHLGNAQCTVQNIEVVRVDAGRGLLFLKGSVPGSKGNGVFIRPGVKQPSK</sequence>
<reference key="1">
    <citation type="journal article" date="2003" name="J. Bacteriol.">
        <title>Complete genome sequence of the ammonia-oxidizing bacterium and obligate chemolithoautotroph Nitrosomonas europaea.</title>
        <authorList>
            <person name="Chain P."/>
            <person name="Lamerdin J.E."/>
            <person name="Larimer F.W."/>
            <person name="Regala W."/>
            <person name="Lao V."/>
            <person name="Land M.L."/>
            <person name="Hauser L."/>
            <person name="Hooper A.B."/>
            <person name="Klotz M.G."/>
            <person name="Norton J."/>
            <person name="Sayavedra-Soto L.A."/>
            <person name="Arciero D.M."/>
            <person name="Hommes N.G."/>
            <person name="Whittaker M.M."/>
            <person name="Arp D.J."/>
        </authorList>
    </citation>
    <scope>NUCLEOTIDE SEQUENCE [LARGE SCALE GENOMIC DNA]</scope>
    <source>
        <strain>ATCC 19718 / CIP 103999 / KCTC 2705 / NBRC 14298</strain>
    </source>
</reference>
<feature type="chain" id="PRO_0000077128" description="Large ribosomal subunit protein uL3">
    <location>
        <begin position="1"/>
        <end position="215"/>
    </location>
</feature>
<feature type="region of interest" description="Disordered" evidence="2">
    <location>
        <begin position="131"/>
        <end position="150"/>
    </location>
</feature>
<feature type="compositionally biased region" description="Low complexity" evidence="2">
    <location>
        <begin position="131"/>
        <end position="144"/>
    </location>
</feature>
<feature type="modified residue" description="N5-methylglutamine" evidence="1">
    <location>
        <position position="153"/>
    </location>
</feature>
<organism>
    <name type="scientific">Nitrosomonas europaea (strain ATCC 19718 / CIP 103999 / KCTC 2705 / NBRC 14298)</name>
    <dbReference type="NCBI Taxonomy" id="228410"/>
    <lineage>
        <taxon>Bacteria</taxon>
        <taxon>Pseudomonadati</taxon>
        <taxon>Pseudomonadota</taxon>
        <taxon>Betaproteobacteria</taxon>
        <taxon>Nitrosomonadales</taxon>
        <taxon>Nitrosomonadaceae</taxon>
        <taxon>Nitrosomonas</taxon>
    </lineage>
</organism>
<proteinExistence type="inferred from homology"/>
<gene>
    <name evidence="1" type="primary">rplC</name>
    <name type="ordered locus">NE0401</name>
</gene>
<accession>Q82X88</accession>
<evidence type="ECO:0000255" key="1">
    <source>
        <dbReference type="HAMAP-Rule" id="MF_01325"/>
    </source>
</evidence>
<evidence type="ECO:0000256" key="2">
    <source>
        <dbReference type="SAM" id="MobiDB-lite"/>
    </source>
</evidence>
<evidence type="ECO:0000305" key="3"/>
<dbReference type="EMBL" id="AL954747">
    <property type="protein sequence ID" value="CAD84312.1"/>
    <property type="molecule type" value="Genomic_DNA"/>
</dbReference>
<dbReference type="SMR" id="Q82X88"/>
<dbReference type="STRING" id="228410.NE0401"/>
<dbReference type="KEGG" id="neu:NE0401"/>
<dbReference type="eggNOG" id="COG0087">
    <property type="taxonomic scope" value="Bacteria"/>
</dbReference>
<dbReference type="HOGENOM" id="CLU_044142_4_1_4"/>
<dbReference type="OrthoDB" id="9806135at2"/>
<dbReference type="PhylomeDB" id="Q82X88"/>
<dbReference type="Proteomes" id="UP000001416">
    <property type="component" value="Chromosome"/>
</dbReference>
<dbReference type="GO" id="GO:0022625">
    <property type="term" value="C:cytosolic large ribosomal subunit"/>
    <property type="evidence" value="ECO:0007669"/>
    <property type="project" value="TreeGrafter"/>
</dbReference>
<dbReference type="GO" id="GO:0019843">
    <property type="term" value="F:rRNA binding"/>
    <property type="evidence" value="ECO:0007669"/>
    <property type="project" value="UniProtKB-UniRule"/>
</dbReference>
<dbReference type="GO" id="GO:0003735">
    <property type="term" value="F:structural constituent of ribosome"/>
    <property type="evidence" value="ECO:0007669"/>
    <property type="project" value="InterPro"/>
</dbReference>
<dbReference type="GO" id="GO:0006412">
    <property type="term" value="P:translation"/>
    <property type="evidence" value="ECO:0007669"/>
    <property type="project" value="UniProtKB-UniRule"/>
</dbReference>
<dbReference type="FunFam" id="2.40.30.10:FF:000004">
    <property type="entry name" value="50S ribosomal protein L3"/>
    <property type="match status" value="1"/>
</dbReference>
<dbReference type="FunFam" id="3.30.160.810:FF:000001">
    <property type="entry name" value="50S ribosomal protein L3"/>
    <property type="match status" value="1"/>
</dbReference>
<dbReference type="Gene3D" id="3.30.160.810">
    <property type="match status" value="1"/>
</dbReference>
<dbReference type="Gene3D" id="2.40.30.10">
    <property type="entry name" value="Translation factors"/>
    <property type="match status" value="1"/>
</dbReference>
<dbReference type="HAMAP" id="MF_01325_B">
    <property type="entry name" value="Ribosomal_uL3_B"/>
    <property type="match status" value="1"/>
</dbReference>
<dbReference type="InterPro" id="IPR000597">
    <property type="entry name" value="Ribosomal_uL3"/>
</dbReference>
<dbReference type="InterPro" id="IPR019927">
    <property type="entry name" value="Ribosomal_uL3_bac/org-type"/>
</dbReference>
<dbReference type="InterPro" id="IPR019926">
    <property type="entry name" value="Ribosomal_uL3_CS"/>
</dbReference>
<dbReference type="InterPro" id="IPR009000">
    <property type="entry name" value="Transl_B-barrel_sf"/>
</dbReference>
<dbReference type="NCBIfam" id="TIGR03625">
    <property type="entry name" value="L3_bact"/>
    <property type="match status" value="1"/>
</dbReference>
<dbReference type="PANTHER" id="PTHR11229">
    <property type="entry name" value="50S RIBOSOMAL PROTEIN L3"/>
    <property type="match status" value="1"/>
</dbReference>
<dbReference type="PANTHER" id="PTHR11229:SF16">
    <property type="entry name" value="LARGE RIBOSOMAL SUBUNIT PROTEIN UL3C"/>
    <property type="match status" value="1"/>
</dbReference>
<dbReference type="Pfam" id="PF00297">
    <property type="entry name" value="Ribosomal_L3"/>
    <property type="match status" value="1"/>
</dbReference>
<dbReference type="SUPFAM" id="SSF50447">
    <property type="entry name" value="Translation proteins"/>
    <property type="match status" value="1"/>
</dbReference>
<dbReference type="PROSITE" id="PS00474">
    <property type="entry name" value="RIBOSOMAL_L3"/>
    <property type="match status" value="1"/>
</dbReference>
<comment type="function">
    <text evidence="1">One of the primary rRNA binding proteins, it binds directly near the 3'-end of the 23S rRNA, where it nucleates assembly of the 50S subunit.</text>
</comment>
<comment type="subunit">
    <text evidence="1">Part of the 50S ribosomal subunit. Forms a cluster with proteins L14 and L19.</text>
</comment>
<comment type="PTM">
    <text evidence="1">Methylated by PrmB.</text>
</comment>
<comment type="similarity">
    <text evidence="1">Belongs to the universal ribosomal protein uL3 family.</text>
</comment>
<protein>
    <recommendedName>
        <fullName evidence="1">Large ribosomal subunit protein uL3</fullName>
    </recommendedName>
    <alternativeName>
        <fullName evidence="3">50S ribosomal protein L3</fullName>
    </alternativeName>
</protein>
<keyword id="KW-0488">Methylation</keyword>
<keyword id="KW-1185">Reference proteome</keyword>
<keyword id="KW-0687">Ribonucleoprotein</keyword>
<keyword id="KW-0689">Ribosomal protein</keyword>
<keyword id="KW-0694">RNA-binding</keyword>
<keyword id="KW-0699">rRNA-binding</keyword>
<name>RL3_NITEU</name>